<comment type="function">
    <text evidence="1">NDH-1 shuttles electrons from NADH, via FMN and iron-sulfur (Fe-S) centers, to quinones in the respiratory chain. The immediate electron acceptor for the enzyme in this species is believed to be ubiquinone. Couples the redox reaction to proton translocation (for every two electrons transferred, four hydrogen ions are translocated across the cytoplasmic membrane), and thus conserves the redox energy in a proton gradient.</text>
</comment>
<comment type="catalytic activity">
    <reaction evidence="1">
        <text>a quinone + NADH + 5 H(+)(in) = a quinol + NAD(+) + 4 H(+)(out)</text>
        <dbReference type="Rhea" id="RHEA:57888"/>
        <dbReference type="ChEBI" id="CHEBI:15378"/>
        <dbReference type="ChEBI" id="CHEBI:24646"/>
        <dbReference type="ChEBI" id="CHEBI:57540"/>
        <dbReference type="ChEBI" id="CHEBI:57945"/>
        <dbReference type="ChEBI" id="CHEBI:132124"/>
    </reaction>
</comment>
<comment type="subunit">
    <text evidence="1">NDH-1 is composed of 14 different subunits. Subunits NuoB, C, D, E, F, and G constitute the peripheral sector of the complex.</text>
</comment>
<comment type="subcellular location">
    <subcellularLocation>
        <location evidence="1">Cell inner membrane</location>
        <topology evidence="1">Peripheral membrane protein</topology>
        <orientation evidence="1">Cytoplasmic side</orientation>
    </subcellularLocation>
</comment>
<comment type="similarity">
    <text evidence="1">Belongs to the complex I 49 kDa subunit family.</text>
</comment>
<evidence type="ECO:0000255" key="1">
    <source>
        <dbReference type="HAMAP-Rule" id="MF_01358"/>
    </source>
</evidence>
<evidence type="ECO:0000305" key="2"/>
<gene>
    <name evidence="1" type="primary">nuoD2</name>
    <name type="ordered locus">RA0831</name>
    <name type="ORF">SMa1529</name>
</gene>
<geneLocation type="plasmid">
    <name>pSymA</name>
    <name>megaplasmid 1</name>
</geneLocation>
<accession>P56908</accession>
<organism>
    <name type="scientific">Rhizobium meliloti (strain 1021)</name>
    <name type="common">Ensifer meliloti</name>
    <name type="synonym">Sinorhizobium meliloti</name>
    <dbReference type="NCBI Taxonomy" id="266834"/>
    <lineage>
        <taxon>Bacteria</taxon>
        <taxon>Pseudomonadati</taxon>
        <taxon>Pseudomonadota</taxon>
        <taxon>Alphaproteobacteria</taxon>
        <taxon>Hyphomicrobiales</taxon>
        <taxon>Rhizobiaceae</taxon>
        <taxon>Sinorhizobium/Ensifer group</taxon>
        <taxon>Sinorhizobium</taxon>
    </lineage>
</organism>
<proteinExistence type="inferred from homology"/>
<protein>
    <recommendedName>
        <fullName evidence="1">NADH-quinone oxidoreductase subunit D 2</fullName>
        <ecNumber evidence="1">7.1.1.-</ecNumber>
    </recommendedName>
    <alternativeName>
        <fullName evidence="1">NADH dehydrogenase I subunit D 2</fullName>
    </alternativeName>
    <alternativeName>
        <fullName evidence="1">NDH-1 subunit D 2</fullName>
    </alternativeName>
</protein>
<reference key="1">
    <citation type="submission" date="1999-07" db="EMBL/GenBank/DDBJ databases">
        <title>Rhizobium meliloti carries two sets of nuo genes.</title>
        <authorList>
            <person name="Putnoky P."/>
            <person name="Jady B."/>
            <person name="Chellapilla K.P."/>
            <person name="Barta F."/>
            <person name="Kiss E."/>
        </authorList>
    </citation>
    <scope>NUCLEOTIDE SEQUENCE [GENOMIC DNA]</scope>
    <source>
        <strain>41</strain>
    </source>
</reference>
<reference key="2">
    <citation type="journal article" date="2001" name="Proc. Natl. Acad. Sci. U.S.A.">
        <title>Nucleotide sequence and predicted functions of the entire Sinorhizobium meliloti pSymA megaplasmid.</title>
        <authorList>
            <person name="Barnett M.J."/>
            <person name="Fisher R.F."/>
            <person name="Jones T."/>
            <person name="Komp C."/>
            <person name="Abola A.P."/>
            <person name="Barloy-Hubler F."/>
            <person name="Bowser L."/>
            <person name="Capela D."/>
            <person name="Galibert F."/>
            <person name="Gouzy J."/>
            <person name="Gurjal M."/>
            <person name="Hong A."/>
            <person name="Huizar L."/>
            <person name="Hyman R.W."/>
            <person name="Kahn D."/>
            <person name="Kahn M.L."/>
            <person name="Kalman S."/>
            <person name="Keating D.H."/>
            <person name="Palm C."/>
            <person name="Peck M.C."/>
            <person name="Surzycki R."/>
            <person name="Wells D.H."/>
            <person name="Yeh K.-C."/>
            <person name="Davis R.W."/>
            <person name="Federspiel N.A."/>
            <person name="Long S.R."/>
        </authorList>
    </citation>
    <scope>NUCLEOTIDE SEQUENCE [LARGE SCALE GENOMIC DNA]</scope>
    <source>
        <strain>1021</strain>
    </source>
</reference>
<reference key="3">
    <citation type="journal article" date="2001" name="Science">
        <title>The composite genome of the legume symbiont Sinorhizobium meliloti.</title>
        <authorList>
            <person name="Galibert F."/>
            <person name="Finan T.M."/>
            <person name="Long S.R."/>
            <person name="Puehler A."/>
            <person name="Abola P."/>
            <person name="Ampe F."/>
            <person name="Barloy-Hubler F."/>
            <person name="Barnett M.J."/>
            <person name="Becker A."/>
            <person name="Boistard P."/>
            <person name="Bothe G."/>
            <person name="Boutry M."/>
            <person name="Bowser L."/>
            <person name="Buhrmester J."/>
            <person name="Cadieu E."/>
            <person name="Capela D."/>
            <person name="Chain P."/>
            <person name="Cowie A."/>
            <person name="Davis R.W."/>
            <person name="Dreano S."/>
            <person name="Federspiel N.A."/>
            <person name="Fisher R.F."/>
            <person name="Gloux S."/>
            <person name="Godrie T."/>
            <person name="Goffeau A."/>
            <person name="Golding B."/>
            <person name="Gouzy J."/>
            <person name="Gurjal M."/>
            <person name="Hernandez-Lucas I."/>
            <person name="Hong A."/>
            <person name="Huizar L."/>
            <person name="Hyman R.W."/>
            <person name="Jones T."/>
            <person name="Kahn D."/>
            <person name="Kahn M.L."/>
            <person name="Kalman S."/>
            <person name="Keating D.H."/>
            <person name="Kiss E."/>
            <person name="Komp C."/>
            <person name="Lelaure V."/>
            <person name="Masuy D."/>
            <person name="Palm C."/>
            <person name="Peck M.C."/>
            <person name="Pohl T.M."/>
            <person name="Portetelle D."/>
            <person name="Purnelle B."/>
            <person name="Ramsperger U."/>
            <person name="Surzycki R."/>
            <person name="Thebault P."/>
            <person name="Vandenbol M."/>
            <person name="Vorhoelter F.J."/>
            <person name="Weidner S."/>
            <person name="Wells D.H."/>
            <person name="Wong K."/>
            <person name="Yeh K.-C."/>
            <person name="Batut J."/>
        </authorList>
    </citation>
    <scope>NUCLEOTIDE SEQUENCE [LARGE SCALE GENOMIC DNA]</scope>
    <source>
        <strain>1021</strain>
    </source>
</reference>
<name>NUOD2_RHIME</name>
<keyword id="KW-0997">Cell inner membrane</keyword>
<keyword id="KW-1003">Cell membrane</keyword>
<keyword id="KW-0472">Membrane</keyword>
<keyword id="KW-0520">NAD</keyword>
<keyword id="KW-0614">Plasmid</keyword>
<keyword id="KW-0874">Quinone</keyword>
<keyword id="KW-1185">Reference proteome</keyword>
<keyword id="KW-1278">Translocase</keyword>
<keyword id="KW-0813">Transport</keyword>
<keyword id="KW-0830">Ubiquinone</keyword>
<sequence>MTEVTELMRPEGEALNTKEVLLNLGPQHPSTHGVLRLVLQLDGEYVERVDPHIGYLHRGTEKLAESFTYTQIFPLTDRLDYLCPPSNNLAFALAVEKLLGIEAPIRAQYIRVMMAELARISGHLLITGALPMDLGAMTALLYAMREREMIMDLLEMITGARMHTSYCRVGGVREDLPDGFLPKIREFCEIFPNRIRDYERLIENNRVFLSRTQGVGVISATDAIDLGLSGPNLRASGVDWDIRRDEPYEIYDRLDFDVITREEGDCYSRWLCRVDEMRESIRLIEQCMEQMPEGPFQVDIPTIAFPVDKERVHCSMEALIQHFDLSAYGFDVPAGEVYSVIEAPKGELGFYIISDGSPKPFRMKVRAPSFVNLQALFGVTNARYLADMIAVLGSLDPVMAEVDK</sequence>
<feature type="chain" id="PRO_0000118623" description="NADH-quinone oxidoreductase subunit D 2">
    <location>
        <begin position="1"/>
        <end position="404"/>
    </location>
</feature>
<feature type="sequence conflict" description="In Ref. 1; CAB51632." evidence="2" ref="1">
    <original>P</original>
    <variation>A</variation>
    <location>
        <position position="295"/>
    </location>
</feature>
<dbReference type="EC" id="7.1.1.-" evidence="1"/>
<dbReference type="EMBL" id="AJ245399">
    <property type="protein sequence ID" value="CAB51632.1"/>
    <property type="molecule type" value="Genomic_DNA"/>
</dbReference>
<dbReference type="EMBL" id="AE006469">
    <property type="protein sequence ID" value="AAK65489.1"/>
    <property type="molecule type" value="Genomic_DNA"/>
</dbReference>
<dbReference type="PIR" id="G95365">
    <property type="entry name" value="G95365"/>
</dbReference>
<dbReference type="RefSeq" id="NP_436077.1">
    <property type="nucleotide sequence ID" value="NC_003037.1"/>
</dbReference>
<dbReference type="SMR" id="P56908"/>
<dbReference type="EnsemblBacteria" id="AAK65489">
    <property type="protein sequence ID" value="AAK65489"/>
    <property type="gene ID" value="SMa1529"/>
</dbReference>
<dbReference type="KEGG" id="sme:SMa1529"/>
<dbReference type="PATRIC" id="fig|266834.11.peg.862"/>
<dbReference type="HOGENOM" id="CLU_015134_1_2_5"/>
<dbReference type="OrthoDB" id="9801496at2"/>
<dbReference type="Proteomes" id="UP000001976">
    <property type="component" value="Plasmid pSymA"/>
</dbReference>
<dbReference type="GO" id="GO:0005886">
    <property type="term" value="C:plasma membrane"/>
    <property type="evidence" value="ECO:0007669"/>
    <property type="project" value="UniProtKB-SubCell"/>
</dbReference>
<dbReference type="GO" id="GO:0051287">
    <property type="term" value="F:NAD binding"/>
    <property type="evidence" value="ECO:0007669"/>
    <property type="project" value="InterPro"/>
</dbReference>
<dbReference type="GO" id="GO:0050136">
    <property type="term" value="F:NADH:ubiquinone reductase (non-electrogenic) activity"/>
    <property type="evidence" value="ECO:0007669"/>
    <property type="project" value="UniProtKB-UniRule"/>
</dbReference>
<dbReference type="GO" id="GO:0048038">
    <property type="term" value="F:quinone binding"/>
    <property type="evidence" value="ECO:0007669"/>
    <property type="project" value="UniProtKB-KW"/>
</dbReference>
<dbReference type="Gene3D" id="1.10.645.10">
    <property type="entry name" value="Cytochrome-c3 Hydrogenase, chain B"/>
    <property type="match status" value="1"/>
</dbReference>
<dbReference type="HAMAP" id="MF_01358">
    <property type="entry name" value="NDH1_NuoD"/>
    <property type="match status" value="1"/>
</dbReference>
<dbReference type="InterPro" id="IPR001135">
    <property type="entry name" value="NADH_Q_OxRdtase_suD"/>
</dbReference>
<dbReference type="InterPro" id="IPR022885">
    <property type="entry name" value="NDH1_su_D/H"/>
</dbReference>
<dbReference type="InterPro" id="IPR029014">
    <property type="entry name" value="NiFe-Hase_large"/>
</dbReference>
<dbReference type="NCBIfam" id="TIGR01962">
    <property type="entry name" value="NuoD"/>
    <property type="match status" value="1"/>
</dbReference>
<dbReference type="NCBIfam" id="NF004739">
    <property type="entry name" value="PRK06075.1"/>
    <property type="match status" value="1"/>
</dbReference>
<dbReference type="PANTHER" id="PTHR11993:SF10">
    <property type="entry name" value="NADH DEHYDROGENASE [UBIQUINONE] IRON-SULFUR PROTEIN 2, MITOCHONDRIAL"/>
    <property type="match status" value="1"/>
</dbReference>
<dbReference type="PANTHER" id="PTHR11993">
    <property type="entry name" value="NADH-UBIQUINONE OXIDOREDUCTASE 49 KDA SUBUNIT"/>
    <property type="match status" value="1"/>
</dbReference>
<dbReference type="Pfam" id="PF00346">
    <property type="entry name" value="Complex1_49kDa"/>
    <property type="match status" value="1"/>
</dbReference>
<dbReference type="SUPFAM" id="SSF56762">
    <property type="entry name" value="HydB/Nqo4-like"/>
    <property type="match status" value="1"/>
</dbReference>